<keyword id="KW-0963">Cytoplasm</keyword>
<keyword id="KW-0472">Membrane</keyword>
<keyword id="KW-1185">Reference proteome</keyword>
<keyword id="KW-0734">Signal transduction inhibitor</keyword>
<comment type="function">
    <text evidence="1">Inhibits signal transduction by increasing the GTPase activity of G protein alpha subunits thereby driving them into their inactive GDP-bound form. Binds to G(i)-alpha and G(o)-alpha, but not to G(s)-alpha (By similarity).</text>
</comment>
<comment type="subcellular location">
    <subcellularLocation>
        <location evidence="2">Cytoplasm</location>
    </subcellularLocation>
    <subcellularLocation>
        <location evidence="2">Membrane</location>
    </subcellularLocation>
</comment>
<accession>P49800</accession>
<accession>Q9JKD7</accession>
<evidence type="ECO:0000250" key="1"/>
<evidence type="ECO:0000250" key="2">
    <source>
        <dbReference type="UniProtKB" id="O15539"/>
    </source>
</evidence>
<evidence type="ECO:0000255" key="3">
    <source>
        <dbReference type="PROSITE-ProRule" id="PRU00171"/>
    </source>
</evidence>
<sequence>MCKGLAALPHSCLERAKEIKIKLGILLQKPDSAVDLVIPYNEKPEKPAKAHKPSLEEVLQWRQSLDKLLQSNYGFASFKSFLKSEFSEENLEFWVACENYKKIKSPIKMAEKAKQIYEEFIQTEAPKEVNIDHFTKDITMKNLVEPSPHSFDLAQKRIYALMEKDSLPRFVRSEFYKELIN</sequence>
<name>RGS5_RAT</name>
<feature type="chain" id="PRO_0000204191" description="Regulator of G-protein signaling 5">
    <location>
        <begin position="1"/>
        <end position="181"/>
    </location>
</feature>
<feature type="domain" description="RGS" evidence="3">
    <location>
        <begin position="64"/>
        <end position="180"/>
    </location>
</feature>
<proteinExistence type="evidence at transcript level"/>
<dbReference type="EMBL" id="AF241259">
    <property type="protein sequence ID" value="AAF73424.1"/>
    <property type="molecule type" value="mRNA"/>
</dbReference>
<dbReference type="EMBL" id="U32435">
    <property type="protein sequence ID" value="AAC52372.1"/>
    <property type="molecule type" value="mRNA"/>
</dbReference>
<dbReference type="RefSeq" id="NP_062214.1">
    <property type="nucleotide sequence ID" value="NM_019341.1"/>
</dbReference>
<dbReference type="SMR" id="P49800"/>
<dbReference type="FunCoup" id="P49800">
    <property type="interactions" value="125"/>
</dbReference>
<dbReference type="STRING" id="10116.ENSRNOP00000069463"/>
<dbReference type="PhosphoSitePlus" id="P49800"/>
<dbReference type="PaxDb" id="10116-ENSRNOP00000003705"/>
<dbReference type="Ensembl" id="ENSRNOT00000079593.2">
    <property type="protein sequence ID" value="ENSRNOP00000069463.2"/>
    <property type="gene ID" value="ENSRNOG00000002730.8"/>
</dbReference>
<dbReference type="GeneID" id="54294"/>
<dbReference type="KEGG" id="rno:54294"/>
<dbReference type="UCSC" id="RGD:3568">
    <property type="organism name" value="rat"/>
</dbReference>
<dbReference type="AGR" id="RGD:3568"/>
<dbReference type="CTD" id="8490"/>
<dbReference type="RGD" id="3568">
    <property type="gene designation" value="Rgs5"/>
</dbReference>
<dbReference type="eggNOG" id="KOG3589">
    <property type="taxonomic scope" value="Eukaryota"/>
</dbReference>
<dbReference type="GeneTree" id="ENSGT00940000157380"/>
<dbReference type="InParanoid" id="P49800"/>
<dbReference type="OMA" id="FIIPYPD"/>
<dbReference type="OrthoDB" id="196547at2759"/>
<dbReference type="PhylomeDB" id="P49800"/>
<dbReference type="Reactome" id="R-RNO-416476">
    <property type="pathway name" value="G alpha (q) signalling events"/>
</dbReference>
<dbReference type="Reactome" id="R-RNO-418594">
    <property type="pathway name" value="G alpha (i) signalling events"/>
</dbReference>
<dbReference type="PRO" id="PR:P49800"/>
<dbReference type="Proteomes" id="UP000002494">
    <property type="component" value="Chromosome 13"/>
</dbReference>
<dbReference type="GO" id="GO:0005829">
    <property type="term" value="C:cytosol"/>
    <property type="evidence" value="ECO:0007669"/>
    <property type="project" value="Ensembl"/>
</dbReference>
<dbReference type="GO" id="GO:0043231">
    <property type="term" value="C:intracellular membrane-bounded organelle"/>
    <property type="evidence" value="ECO:0007669"/>
    <property type="project" value="Ensembl"/>
</dbReference>
<dbReference type="GO" id="GO:0016020">
    <property type="term" value="C:membrane"/>
    <property type="evidence" value="ECO:0007669"/>
    <property type="project" value="UniProtKB-SubCell"/>
</dbReference>
<dbReference type="GO" id="GO:0009968">
    <property type="term" value="P:negative regulation of signal transduction"/>
    <property type="evidence" value="ECO:0007669"/>
    <property type="project" value="UniProtKB-KW"/>
</dbReference>
<dbReference type="GO" id="GO:1904706">
    <property type="term" value="P:negative regulation of vascular associated smooth muscle cell proliferation"/>
    <property type="evidence" value="ECO:0000314"/>
    <property type="project" value="RGD"/>
</dbReference>
<dbReference type="CDD" id="cd08717">
    <property type="entry name" value="RGS_RGS5"/>
    <property type="match status" value="1"/>
</dbReference>
<dbReference type="FunFam" id="1.10.167.10:FF:000001">
    <property type="entry name" value="Putative regulator of g-protein signaling 12"/>
    <property type="match status" value="1"/>
</dbReference>
<dbReference type="FunFam" id="1.10.196.10:FF:000001">
    <property type="entry name" value="Regulator of G-protein signaling 8"/>
    <property type="match status" value="1"/>
</dbReference>
<dbReference type="Gene3D" id="1.10.196.10">
    <property type="match status" value="1"/>
</dbReference>
<dbReference type="Gene3D" id="1.10.167.10">
    <property type="entry name" value="Regulator of G-protein Signalling 4, domain 2"/>
    <property type="match status" value="1"/>
</dbReference>
<dbReference type="InterPro" id="IPR016137">
    <property type="entry name" value="RGS"/>
</dbReference>
<dbReference type="InterPro" id="IPR034956">
    <property type="entry name" value="RGS_RGS5"/>
</dbReference>
<dbReference type="InterPro" id="IPR036305">
    <property type="entry name" value="RGS_sf"/>
</dbReference>
<dbReference type="InterPro" id="IPR024066">
    <property type="entry name" value="RGS_subdom1/3"/>
</dbReference>
<dbReference type="InterPro" id="IPR044926">
    <property type="entry name" value="RGS_subdomain_2"/>
</dbReference>
<dbReference type="PANTHER" id="PTHR10845">
    <property type="entry name" value="REGULATOR OF G PROTEIN SIGNALING"/>
    <property type="match status" value="1"/>
</dbReference>
<dbReference type="PANTHER" id="PTHR10845:SF42">
    <property type="entry name" value="REGULATOR OF G-PROTEIN SIGNALING 5"/>
    <property type="match status" value="1"/>
</dbReference>
<dbReference type="Pfam" id="PF00615">
    <property type="entry name" value="RGS"/>
    <property type="match status" value="1"/>
</dbReference>
<dbReference type="PRINTS" id="PR01301">
    <property type="entry name" value="RGSPROTEIN"/>
</dbReference>
<dbReference type="SMART" id="SM00315">
    <property type="entry name" value="RGS"/>
    <property type="match status" value="1"/>
</dbReference>
<dbReference type="SUPFAM" id="SSF48097">
    <property type="entry name" value="Regulator of G-protein signaling, RGS"/>
    <property type="match status" value="1"/>
</dbReference>
<dbReference type="PROSITE" id="PS50132">
    <property type="entry name" value="RGS"/>
    <property type="match status" value="1"/>
</dbReference>
<organism>
    <name type="scientific">Rattus norvegicus</name>
    <name type="common">Rat</name>
    <dbReference type="NCBI Taxonomy" id="10116"/>
    <lineage>
        <taxon>Eukaryota</taxon>
        <taxon>Metazoa</taxon>
        <taxon>Chordata</taxon>
        <taxon>Craniata</taxon>
        <taxon>Vertebrata</taxon>
        <taxon>Euteleostomi</taxon>
        <taxon>Mammalia</taxon>
        <taxon>Eutheria</taxon>
        <taxon>Euarchontoglires</taxon>
        <taxon>Glires</taxon>
        <taxon>Rodentia</taxon>
        <taxon>Myomorpha</taxon>
        <taxon>Muroidea</taxon>
        <taxon>Muridae</taxon>
        <taxon>Murinae</taxon>
        <taxon>Rattus</taxon>
    </lineage>
</organism>
<gene>
    <name type="primary">Rgs5</name>
</gene>
<reference key="1">
    <citation type="submission" date="2000-03" db="EMBL/GenBank/DDBJ databases">
        <authorList>
            <person name="Kirsch T."/>
            <person name="Lippoldt A."/>
            <person name="Wellner M."/>
            <person name="Haller H."/>
        </authorList>
    </citation>
    <scope>NUCLEOTIDE SEQUENCE [MRNA]</scope>
</reference>
<reference key="2">
    <citation type="journal article" date="1996" name="Cell">
        <title>EGL-10 regulates G protein signaling in the C. elegans nervous system and shares a conserved domain with many mammalian proteins.</title>
        <authorList>
            <person name="Koelle M.R."/>
            <person name="Horvitz H.R."/>
        </authorList>
    </citation>
    <scope>NUCLEOTIDE SEQUENCE [MRNA] OF 95-161</scope>
    <source>
        <tissue>Brain</tissue>
    </source>
</reference>
<protein>
    <recommendedName>
        <fullName>Regulator of G-protein signaling 5</fullName>
        <shortName>RGS5</shortName>
    </recommendedName>
</protein>